<feature type="chain" id="PRO_0000154544" description="cAMP-dependent protein kinase inhibitor gamma">
    <location>
        <begin position="1"/>
        <end position="76"/>
    </location>
</feature>
<feature type="region of interest" description="Disordered" evidence="2">
    <location>
        <begin position="1"/>
        <end position="25"/>
    </location>
</feature>
<feature type="region of interest" description="Disordered" evidence="2">
    <location>
        <begin position="47"/>
        <end position="76"/>
    </location>
</feature>
<feature type="compositionally biased region" description="Polar residues" evidence="2">
    <location>
        <begin position="1"/>
        <end position="10"/>
    </location>
</feature>
<feature type="compositionally biased region" description="Low complexity" evidence="2">
    <location>
        <begin position="47"/>
        <end position="57"/>
    </location>
</feature>
<feature type="compositionally biased region" description="Polar residues" evidence="2">
    <location>
        <begin position="64"/>
        <end position="76"/>
    </location>
</feature>
<gene>
    <name type="primary">PKIG</name>
</gene>
<sequence length="76" mass="7912">MMEVESSYSDFISCDRTGRRNAVPDIQGDSEAVSVRKLAGDMGELALEGAEGQAEGGTPDKEASNQPQSSDGTTSS</sequence>
<organism>
    <name type="scientific">Sus scrofa</name>
    <name type="common">Pig</name>
    <dbReference type="NCBI Taxonomy" id="9823"/>
    <lineage>
        <taxon>Eukaryota</taxon>
        <taxon>Metazoa</taxon>
        <taxon>Chordata</taxon>
        <taxon>Craniata</taxon>
        <taxon>Vertebrata</taxon>
        <taxon>Euteleostomi</taxon>
        <taxon>Mammalia</taxon>
        <taxon>Eutheria</taxon>
        <taxon>Laurasiatheria</taxon>
        <taxon>Artiodactyla</taxon>
        <taxon>Suina</taxon>
        <taxon>Suidae</taxon>
        <taxon>Sus</taxon>
    </lineage>
</organism>
<comment type="function">
    <text evidence="1">Extremely potent competitive inhibitor of cAMP-dependent protein kinase activity, this protein interacts with the catalytic subunit of the enzyme after the cAMP-induced dissociation of its regulatory chains.</text>
</comment>
<comment type="similarity">
    <text evidence="3">Belongs to the PKI family.</text>
</comment>
<evidence type="ECO:0000250" key="1"/>
<evidence type="ECO:0000256" key="2">
    <source>
        <dbReference type="SAM" id="MobiDB-lite"/>
    </source>
</evidence>
<evidence type="ECO:0000305" key="3"/>
<name>IPKG_PIG</name>
<accession>Q7YQJ4</accession>
<keyword id="KW-0649">Protein kinase inhibitor</keyword>
<keyword id="KW-1185">Reference proteome</keyword>
<proteinExistence type="inferred from homology"/>
<dbReference type="EMBL" id="AY339895">
    <property type="protein sequence ID" value="AAQ17070.1"/>
    <property type="molecule type" value="mRNA"/>
</dbReference>
<dbReference type="RefSeq" id="NP_999536.1">
    <property type="nucleotide sequence ID" value="NM_214371.1"/>
</dbReference>
<dbReference type="RefSeq" id="XP_005673006.1">
    <property type="nucleotide sequence ID" value="XM_005672949.3"/>
</dbReference>
<dbReference type="RefSeq" id="XP_005673007.1">
    <property type="nucleotide sequence ID" value="XM_005672950.3"/>
</dbReference>
<dbReference type="RefSeq" id="XP_013840843.1">
    <property type="nucleotide sequence ID" value="XM_013985389.1"/>
</dbReference>
<dbReference type="RefSeq" id="XP_020932968.1">
    <property type="nucleotide sequence ID" value="XM_021077309.1"/>
</dbReference>
<dbReference type="RefSeq" id="XP_020932969.1">
    <property type="nucleotide sequence ID" value="XM_021077310.1"/>
</dbReference>
<dbReference type="FunCoup" id="Q7YQJ4">
    <property type="interactions" value="285"/>
</dbReference>
<dbReference type="STRING" id="9823.ENSSSCP00000026610"/>
<dbReference type="GlyGen" id="Q7YQJ4">
    <property type="glycosylation" value="1 site"/>
</dbReference>
<dbReference type="PaxDb" id="9823-ENSSSCP00000026610"/>
<dbReference type="Ensembl" id="ENSSSCT00000026128.4">
    <property type="protein sequence ID" value="ENSSSCP00000026610.1"/>
    <property type="gene ID" value="ENSSSCG00000022998.4"/>
</dbReference>
<dbReference type="Ensembl" id="ENSSSCT00015103350.1">
    <property type="protein sequence ID" value="ENSSSCP00015043046.1"/>
    <property type="gene ID" value="ENSSSCG00015076603.1"/>
</dbReference>
<dbReference type="Ensembl" id="ENSSSCT00025074825.1">
    <property type="protein sequence ID" value="ENSSSCP00025032439.1"/>
    <property type="gene ID" value="ENSSSCG00025054711.1"/>
</dbReference>
<dbReference type="Ensembl" id="ENSSSCT00030020122.1">
    <property type="protein sequence ID" value="ENSSSCP00030008967.1"/>
    <property type="gene ID" value="ENSSSCG00030014616.1"/>
</dbReference>
<dbReference type="Ensembl" id="ENSSSCT00035106857.1">
    <property type="protein sequence ID" value="ENSSSCP00035046075.1"/>
    <property type="gene ID" value="ENSSSCG00035078342.1"/>
</dbReference>
<dbReference type="Ensembl" id="ENSSSCT00040075875.1">
    <property type="protein sequence ID" value="ENSSSCP00040032588.1"/>
    <property type="gene ID" value="ENSSSCG00040055998.1"/>
</dbReference>
<dbReference type="Ensembl" id="ENSSSCT00045067775.1">
    <property type="protein sequence ID" value="ENSSSCP00045048166.1"/>
    <property type="gene ID" value="ENSSSCG00045038988.1"/>
</dbReference>
<dbReference type="Ensembl" id="ENSSSCT00050003147.1">
    <property type="protein sequence ID" value="ENSSSCP00050001046.1"/>
    <property type="gene ID" value="ENSSSCG00050002503.1"/>
</dbReference>
<dbReference type="Ensembl" id="ENSSSCT00055017000.1">
    <property type="protein sequence ID" value="ENSSSCP00055013421.1"/>
    <property type="gene ID" value="ENSSSCG00055008714.1"/>
</dbReference>
<dbReference type="Ensembl" id="ENSSSCT00060007993.1">
    <property type="protein sequence ID" value="ENSSSCP00060002883.1"/>
    <property type="gene ID" value="ENSSSCG00060006305.1"/>
</dbReference>
<dbReference type="Ensembl" id="ENSSSCT00065100947.1">
    <property type="protein sequence ID" value="ENSSSCP00065044423.1"/>
    <property type="gene ID" value="ENSSSCG00065073339.1"/>
</dbReference>
<dbReference type="Ensembl" id="ENSSSCT00070023867.1">
    <property type="protein sequence ID" value="ENSSSCP00070019733.1"/>
    <property type="gene ID" value="ENSSSCG00070012212.1"/>
</dbReference>
<dbReference type="Ensembl" id="ENSSSCT00070023871.1">
    <property type="protein sequence ID" value="ENSSSCP00070019738.1"/>
    <property type="gene ID" value="ENSSSCG00070012212.1"/>
</dbReference>
<dbReference type="Ensembl" id="ENSSSCT00085052933">
    <property type="protein sequence ID" value="ENSSSCP00085036989"/>
    <property type="gene ID" value="ENSSSCG00085027686"/>
</dbReference>
<dbReference type="Ensembl" id="ENSSSCT00090006268">
    <property type="protein sequence ID" value="ENSSSCP00090003946"/>
    <property type="gene ID" value="ENSSSCG00090003582"/>
</dbReference>
<dbReference type="Ensembl" id="ENSSSCT00105028231">
    <property type="protein sequence ID" value="ENSSSCP00105019932"/>
    <property type="gene ID" value="ENSSSCG00105014511"/>
</dbReference>
<dbReference type="Ensembl" id="ENSSSCT00110055137">
    <property type="protein sequence ID" value="ENSSSCP00110038312"/>
    <property type="gene ID" value="ENSSSCG00110028787"/>
</dbReference>
<dbReference type="Ensembl" id="ENSSSCT00115036844">
    <property type="protein sequence ID" value="ENSSSCP00115034855"/>
    <property type="gene ID" value="ENSSSCG00115020797"/>
</dbReference>
<dbReference type="Ensembl" id="ENSSSCT00130001136">
    <property type="protein sequence ID" value="ENSSSCP00130000845"/>
    <property type="gene ID" value="ENSSSCG00130000615"/>
</dbReference>
<dbReference type="GeneID" id="397661"/>
<dbReference type="KEGG" id="ssc:397661"/>
<dbReference type="CTD" id="11142"/>
<dbReference type="VGNC" id="VGNC:96486">
    <property type="gene designation" value="PKIG"/>
</dbReference>
<dbReference type="eggNOG" id="ENOG502SBS3">
    <property type="taxonomic scope" value="Eukaryota"/>
</dbReference>
<dbReference type="GeneTree" id="ENSGT00390000002707"/>
<dbReference type="HOGENOM" id="CLU_163471_2_0_1"/>
<dbReference type="InParanoid" id="Q7YQJ4"/>
<dbReference type="OMA" id="CNESACH"/>
<dbReference type="OrthoDB" id="8556393at2759"/>
<dbReference type="TreeFam" id="TF330809"/>
<dbReference type="Proteomes" id="UP000008227">
    <property type="component" value="Chromosome 17"/>
</dbReference>
<dbReference type="Proteomes" id="UP000314985">
    <property type="component" value="Chromosome 17"/>
</dbReference>
<dbReference type="Proteomes" id="UP000694570">
    <property type="component" value="Unplaced"/>
</dbReference>
<dbReference type="Proteomes" id="UP000694571">
    <property type="component" value="Unplaced"/>
</dbReference>
<dbReference type="Proteomes" id="UP000694720">
    <property type="component" value="Unplaced"/>
</dbReference>
<dbReference type="Proteomes" id="UP000694722">
    <property type="component" value="Unplaced"/>
</dbReference>
<dbReference type="Proteomes" id="UP000694723">
    <property type="component" value="Unplaced"/>
</dbReference>
<dbReference type="Proteomes" id="UP000694724">
    <property type="component" value="Unplaced"/>
</dbReference>
<dbReference type="Proteomes" id="UP000694725">
    <property type="component" value="Unplaced"/>
</dbReference>
<dbReference type="Proteomes" id="UP000694726">
    <property type="component" value="Unplaced"/>
</dbReference>
<dbReference type="Proteomes" id="UP000694727">
    <property type="component" value="Unplaced"/>
</dbReference>
<dbReference type="Proteomes" id="UP000694728">
    <property type="component" value="Unplaced"/>
</dbReference>
<dbReference type="Bgee" id="ENSSSCG00000022998">
    <property type="expression patterns" value="Expressed in ovary and 45 other cell types or tissues"/>
</dbReference>
<dbReference type="GO" id="GO:0005737">
    <property type="term" value="C:cytoplasm"/>
    <property type="evidence" value="ECO:0000318"/>
    <property type="project" value="GO_Central"/>
</dbReference>
<dbReference type="GO" id="GO:0005634">
    <property type="term" value="C:nucleus"/>
    <property type="evidence" value="ECO:0000318"/>
    <property type="project" value="GO_Central"/>
</dbReference>
<dbReference type="GO" id="GO:0004862">
    <property type="term" value="F:cAMP-dependent protein kinase inhibitor activity"/>
    <property type="evidence" value="ECO:0000318"/>
    <property type="project" value="GO_Central"/>
</dbReference>
<dbReference type="GO" id="GO:0042308">
    <property type="term" value="P:negative regulation of protein import into nucleus"/>
    <property type="evidence" value="ECO:0007669"/>
    <property type="project" value="Ensembl"/>
</dbReference>
<dbReference type="GO" id="GO:0000122">
    <property type="term" value="P:negative regulation of transcription by RNA polymerase II"/>
    <property type="evidence" value="ECO:0007669"/>
    <property type="project" value="Ensembl"/>
</dbReference>
<dbReference type="InterPro" id="IPR004171">
    <property type="entry name" value="cAMP_dep_PKI"/>
</dbReference>
<dbReference type="PANTHER" id="PTHR15416">
    <property type="entry name" value="CAMP-DEPENDENT PROTEIN KINASE INHIBITOR/PKI"/>
    <property type="match status" value="1"/>
</dbReference>
<dbReference type="Pfam" id="PF02827">
    <property type="entry name" value="PKI"/>
    <property type="match status" value="1"/>
</dbReference>
<dbReference type="PIRSF" id="PIRSF001667">
    <property type="entry name" value="PKI"/>
    <property type="match status" value="1"/>
</dbReference>
<protein>
    <recommendedName>
        <fullName>cAMP-dependent protein kinase inhibitor gamma</fullName>
        <shortName>PKI-gamma</shortName>
    </recommendedName>
</protein>
<reference key="1">
    <citation type="submission" date="2003-07" db="EMBL/GenBank/DDBJ databases">
        <title>Cloning of Sus scrofa protein kinase inhibitor gamma (Pkig), mRNA.</title>
        <authorList>
            <person name="Zhou G."/>
            <person name="Li W."/>
            <person name="Yu L."/>
            <person name="Wang J."/>
            <person name="Zhao S."/>
        </authorList>
    </citation>
    <scope>NUCLEOTIDE SEQUENCE [MRNA]</scope>
</reference>